<comment type="subunit">
    <text evidence="2">Part of the 30S ribosomal subunit.</text>
</comment>
<comment type="similarity">
    <text evidence="1">Belongs to the universal ribosomal protein uS2 family.</text>
</comment>
<keyword id="KW-0002">3D-structure</keyword>
<keyword id="KW-1185">Reference proteome</keyword>
<keyword id="KW-0687">Ribonucleoprotein</keyword>
<keyword id="KW-0689">Ribosomal protein</keyword>
<evidence type="ECO:0000255" key="1">
    <source>
        <dbReference type="HAMAP-Rule" id="MF_00291"/>
    </source>
</evidence>
<evidence type="ECO:0000269" key="2">
    <source>
    </source>
</evidence>
<evidence type="ECO:0007744" key="3">
    <source>
        <dbReference type="PDB" id="4V6U"/>
    </source>
</evidence>
<accession>Q8U0F0</accession>
<organism>
    <name type="scientific">Pyrococcus furiosus (strain ATCC 43587 / DSM 3638 / JCM 8422 / Vc1)</name>
    <dbReference type="NCBI Taxonomy" id="186497"/>
    <lineage>
        <taxon>Archaea</taxon>
        <taxon>Methanobacteriati</taxon>
        <taxon>Methanobacteriota</taxon>
        <taxon>Thermococci</taxon>
        <taxon>Thermococcales</taxon>
        <taxon>Thermococcaceae</taxon>
        <taxon>Pyrococcus</taxon>
    </lineage>
</organism>
<proteinExistence type="evidence at protein level"/>
<sequence>MADEYLVPLDQYLAAGVHIGTQQKTKDMKKFIYRVRQDGLYVLDVRKTDERLKVAGKFLAKFEPQSILAVSVRLYGQKPVKKFGEVTGARAIPGRFLPGTMTNPAVKNFFEPDVLIVTDPRADHQAMREAVEIGIPIVALVDTENLLSYVDLAIPTNNKGRKALALIYWILAREILYNRGEIQSREDFKIPVEEFEMKIVRR</sequence>
<name>RS2_PYRFU</name>
<gene>
    <name evidence="1" type="primary">rps2</name>
    <name type="ordered locus">PF1640</name>
</gene>
<dbReference type="EMBL" id="AE009950">
    <property type="protein sequence ID" value="AAL81764.1"/>
    <property type="molecule type" value="Genomic_DNA"/>
</dbReference>
<dbReference type="PDB" id="4V4N">
    <property type="method" value="EM"/>
    <property type="resolution" value="9.00 A"/>
    <property type="chains" value="B=1-202"/>
</dbReference>
<dbReference type="PDB" id="4V6U">
    <property type="method" value="EM"/>
    <property type="resolution" value="6.60 A"/>
    <property type="chains" value="AB=1-202"/>
</dbReference>
<dbReference type="PDB" id="5JB3">
    <property type="method" value="EM"/>
    <property type="resolution" value="5.34 A"/>
    <property type="chains" value="B=1-202"/>
</dbReference>
<dbReference type="PDB" id="5JBH">
    <property type="method" value="EM"/>
    <property type="resolution" value="5.34 A"/>
    <property type="chains" value="B=1-202"/>
</dbReference>
<dbReference type="PDBsum" id="4V4N"/>
<dbReference type="PDBsum" id="4V6U"/>
<dbReference type="PDBsum" id="5JB3"/>
<dbReference type="PDBsum" id="5JBH"/>
<dbReference type="EMDB" id="EMD-50611"/>
<dbReference type="EMDB" id="EMD-50612"/>
<dbReference type="EMDB" id="EMD-50613"/>
<dbReference type="EMDB" id="EMD-8149"/>
<dbReference type="SMR" id="Q8U0F0"/>
<dbReference type="STRING" id="186497.PF1640"/>
<dbReference type="PaxDb" id="186497-PF1640"/>
<dbReference type="KEGG" id="pfu:PF1640"/>
<dbReference type="PATRIC" id="fig|186497.12.peg.1706"/>
<dbReference type="eggNOG" id="arCOG04245">
    <property type="taxonomic scope" value="Archaea"/>
</dbReference>
<dbReference type="HOGENOM" id="CLU_058171_3_0_2"/>
<dbReference type="OrthoDB" id="371797at2157"/>
<dbReference type="PhylomeDB" id="Q8U0F0"/>
<dbReference type="Proteomes" id="UP000001013">
    <property type="component" value="Chromosome"/>
</dbReference>
<dbReference type="GO" id="GO:0015935">
    <property type="term" value="C:small ribosomal subunit"/>
    <property type="evidence" value="ECO:0007669"/>
    <property type="project" value="InterPro"/>
</dbReference>
<dbReference type="GO" id="GO:0003735">
    <property type="term" value="F:structural constituent of ribosome"/>
    <property type="evidence" value="ECO:0007669"/>
    <property type="project" value="InterPro"/>
</dbReference>
<dbReference type="GO" id="GO:0006412">
    <property type="term" value="P:translation"/>
    <property type="evidence" value="ECO:0007669"/>
    <property type="project" value="UniProtKB-UniRule"/>
</dbReference>
<dbReference type="CDD" id="cd01425">
    <property type="entry name" value="RPS2"/>
    <property type="match status" value="1"/>
</dbReference>
<dbReference type="FunFam" id="3.40.50.10490:FF:000030">
    <property type="entry name" value="30S ribosomal protein S2"/>
    <property type="match status" value="1"/>
</dbReference>
<dbReference type="Gene3D" id="3.40.50.10490">
    <property type="entry name" value="Glucose-6-phosphate isomerase like protein, domain 1"/>
    <property type="match status" value="1"/>
</dbReference>
<dbReference type="HAMAP" id="MF_00291_A">
    <property type="entry name" value="Ribosomal_uS2_A"/>
    <property type="match status" value="1"/>
</dbReference>
<dbReference type="InterPro" id="IPR001865">
    <property type="entry name" value="Ribosomal_uS2"/>
</dbReference>
<dbReference type="InterPro" id="IPR023454">
    <property type="entry name" value="Ribosomal_uS2_arc"/>
</dbReference>
<dbReference type="InterPro" id="IPR018130">
    <property type="entry name" value="Ribosomal_uS2_CS"/>
</dbReference>
<dbReference type="InterPro" id="IPR005707">
    <property type="entry name" value="Ribosomal_uS2_euk/arc"/>
</dbReference>
<dbReference type="InterPro" id="IPR023591">
    <property type="entry name" value="Ribosomal_uS2_flav_dom_sf"/>
</dbReference>
<dbReference type="NCBIfam" id="TIGR01012">
    <property type="entry name" value="uS2_euk_arch"/>
    <property type="match status" value="1"/>
</dbReference>
<dbReference type="PANTHER" id="PTHR11489">
    <property type="entry name" value="40S RIBOSOMAL PROTEIN SA"/>
    <property type="match status" value="1"/>
</dbReference>
<dbReference type="Pfam" id="PF00318">
    <property type="entry name" value="Ribosomal_S2"/>
    <property type="match status" value="2"/>
</dbReference>
<dbReference type="PRINTS" id="PR00395">
    <property type="entry name" value="RIBOSOMALS2"/>
</dbReference>
<dbReference type="SUPFAM" id="SSF52313">
    <property type="entry name" value="Ribosomal protein S2"/>
    <property type="match status" value="1"/>
</dbReference>
<dbReference type="PROSITE" id="PS00962">
    <property type="entry name" value="RIBOSOMAL_S2_1"/>
    <property type="match status" value="1"/>
</dbReference>
<dbReference type="PROSITE" id="PS00963">
    <property type="entry name" value="RIBOSOMAL_S2_2"/>
    <property type="match status" value="1"/>
</dbReference>
<protein>
    <recommendedName>
        <fullName evidence="1">Small ribosomal subunit protein uS2</fullName>
    </recommendedName>
    <alternativeName>
        <fullName>30S ribosomal protein S2</fullName>
    </alternativeName>
</protein>
<reference key="1">
    <citation type="journal article" date="1999" name="Genetics">
        <title>Divergence of the hyperthermophilic archaea Pyrococcus furiosus and P. horikoshii inferred from complete genomic sequences.</title>
        <authorList>
            <person name="Maeder D.L."/>
            <person name="Weiss R.B."/>
            <person name="Dunn D.M."/>
            <person name="Cherry J.L."/>
            <person name="Gonzalez J.M."/>
            <person name="DiRuggiero J."/>
            <person name="Robb F.T."/>
        </authorList>
    </citation>
    <scope>NUCLEOTIDE SEQUENCE [LARGE SCALE GENOMIC DNA]</scope>
    <source>
        <strain>ATCC 43587 / DSM 3638 / JCM 8422 / Vc1</strain>
    </source>
</reference>
<reference evidence="3" key="2">
    <citation type="journal article" date="2013" name="Nucleic Acids Res.">
        <title>Promiscuous behaviour of archaeal ribosomal proteins: implications for eukaryotic ribosome evolution.</title>
        <authorList>
            <person name="Armache J.P."/>
            <person name="Anger A.M."/>
            <person name="Marquez V."/>
            <person name="Franckenberg S."/>
            <person name="Frohlich T."/>
            <person name="Villa E."/>
            <person name="Berninghausen O."/>
            <person name="Thomm M."/>
            <person name="Arnold G.J."/>
            <person name="Beckmann R."/>
            <person name="Wilson D.N."/>
        </authorList>
    </citation>
    <scope>STRUCTURE BY ELECTRON MICROSCOPY (6.60 ANGSTROMS) IN THE 70S RIBOSOME</scope>
    <scope>SUBUNIT</scope>
</reference>
<feature type="chain" id="PRO_0000134330" description="Small ribosomal subunit protein uS2">
    <location>
        <begin position="1"/>
        <end position="202"/>
    </location>
</feature>